<protein>
    <recommendedName>
        <fullName evidence="1">RNA pyrophosphohydrolase</fullName>
        <ecNumber evidence="1">3.6.1.-</ecNumber>
    </recommendedName>
    <alternativeName>
        <fullName evidence="1">(Di)nucleoside polyphosphate hydrolase</fullName>
    </alternativeName>
</protein>
<gene>
    <name evidence="1" type="primary">rppH</name>
    <name evidence="1" type="synonym">nudH</name>
    <name type="ordered locus">Shewmr7_2947</name>
</gene>
<feature type="chain" id="PRO_1000022001" description="RNA pyrophosphohydrolase">
    <location>
        <begin position="1"/>
        <end position="174"/>
    </location>
</feature>
<feature type="domain" description="Nudix hydrolase" evidence="1">
    <location>
        <begin position="6"/>
        <end position="149"/>
    </location>
</feature>
<feature type="short sequence motif" description="Nudix box">
    <location>
        <begin position="38"/>
        <end position="59"/>
    </location>
</feature>
<organism>
    <name type="scientific">Shewanella sp. (strain MR-7)</name>
    <dbReference type="NCBI Taxonomy" id="60481"/>
    <lineage>
        <taxon>Bacteria</taxon>
        <taxon>Pseudomonadati</taxon>
        <taxon>Pseudomonadota</taxon>
        <taxon>Gammaproteobacteria</taxon>
        <taxon>Alteromonadales</taxon>
        <taxon>Shewanellaceae</taxon>
        <taxon>Shewanella</taxon>
    </lineage>
</organism>
<sequence>MIDSDGFRANVGIIICNRYGQVMWARRFGQHSWQFPQGGVDDGETAEEAMYRELYEEVGLRPEHVTILTSTRSWLRYRLPKRLVRQDSKPVCIGQKQKWFLLQLKSQDSAINLSSSGHPEFDDWRWVSYWYPVRQVVSFKRDVYRKVMKEFAVTALSFQTQEIPRKRVRQRTTG</sequence>
<dbReference type="EC" id="3.6.1.-" evidence="1"/>
<dbReference type="EMBL" id="CP000444">
    <property type="protein sequence ID" value="ABI43931.1"/>
    <property type="molecule type" value="Genomic_DNA"/>
</dbReference>
<dbReference type="SMR" id="Q0HSH4"/>
<dbReference type="KEGG" id="shm:Shewmr7_2947"/>
<dbReference type="HOGENOM" id="CLU_087195_3_1_6"/>
<dbReference type="GO" id="GO:0005737">
    <property type="term" value="C:cytoplasm"/>
    <property type="evidence" value="ECO:0007669"/>
    <property type="project" value="TreeGrafter"/>
</dbReference>
<dbReference type="GO" id="GO:0034353">
    <property type="term" value="F:mRNA 5'-diphosphatase activity"/>
    <property type="evidence" value="ECO:0007669"/>
    <property type="project" value="TreeGrafter"/>
</dbReference>
<dbReference type="GO" id="GO:0006402">
    <property type="term" value="P:mRNA catabolic process"/>
    <property type="evidence" value="ECO:0007669"/>
    <property type="project" value="TreeGrafter"/>
</dbReference>
<dbReference type="CDD" id="cd03671">
    <property type="entry name" value="NUDIX_Ap4A_hydrolase_plant_like"/>
    <property type="match status" value="1"/>
</dbReference>
<dbReference type="FunFam" id="3.90.79.10:FF:000001">
    <property type="entry name" value="RNA pyrophosphohydrolase"/>
    <property type="match status" value="1"/>
</dbReference>
<dbReference type="Gene3D" id="3.90.79.10">
    <property type="entry name" value="Nucleoside Triphosphate Pyrophosphohydrolase"/>
    <property type="match status" value="1"/>
</dbReference>
<dbReference type="HAMAP" id="MF_00298">
    <property type="entry name" value="Nudix_RppH"/>
    <property type="match status" value="1"/>
</dbReference>
<dbReference type="InterPro" id="IPR020476">
    <property type="entry name" value="Nudix_hydrolase"/>
</dbReference>
<dbReference type="InterPro" id="IPR015797">
    <property type="entry name" value="NUDIX_hydrolase-like_dom_sf"/>
</dbReference>
<dbReference type="InterPro" id="IPR020084">
    <property type="entry name" value="NUDIX_hydrolase_CS"/>
</dbReference>
<dbReference type="InterPro" id="IPR000086">
    <property type="entry name" value="NUDIX_hydrolase_dom"/>
</dbReference>
<dbReference type="InterPro" id="IPR022927">
    <property type="entry name" value="RppH"/>
</dbReference>
<dbReference type="NCBIfam" id="NF001934">
    <property type="entry name" value="PRK00714.1-1"/>
    <property type="match status" value="1"/>
</dbReference>
<dbReference type="NCBIfam" id="NF001937">
    <property type="entry name" value="PRK00714.1-4"/>
    <property type="match status" value="1"/>
</dbReference>
<dbReference type="NCBIfam" id="NF001938">
    <property type="entry name" value="PRK00714.1-5"/>
    <property type="match status" value="1"/>
</dbReference>
<dbReference type="PANTHER" id="PTHR23114">
    <property type="entry name" value="M7GPPPN-MRNA HYDROLASE"/>
    <property type="match status" value="1"/>
</dbReference>
<dbReference type="PANTHER" id="PTHR23114:SF17">
    <property type="entry name" value="M7GPPPN-MRNA HYDROLASE"/>
    <property type="match status" value="1"/>
</dbReference>
<dbReference type="Pfam" id="PF00293">
    <property type="entry name" value="NUDIX"/>
    <property type="match status" value="1"/>
</dbReference>
<dbReference type="PRINTS" id="PR00502">
    <property type="entry name" value="NUDIXFAMILY"/>
</dbReference>
<dbReference type="SUPFAM" id="SSF55811">
    <property type="entry name" value="Nudix"/>
    <property type="match status" value="1"/>
</dbReference>
<dbReference type="PROSITE" id="PS51462">
    <property type="entry name" value="NUDIX"/>
    <property type="match status" value="1"/>
</dbReference>
<dbReference type="PROSITE" id="PS00893">
    <property type="entry name" value="NUDIX_BOX"/>
    <property type="match status" value="1"/>
</dbReference>
<name>RPPH_SHESR</name>
<reference key="1">
    <citation type="submission" date="2006-08" db="EMBL/GenBank/DDBJ databases">
        <title>Complete sequence of chromosome 1 of Shewanella sp. MR-7.</title>
        <authorList>
            <person name="Copeland A."/>
            <person name="Lucas S."/>
            <person name="Lapidus A."/>
            <person name="Barry K."/>
            <person name="Detter J.C."/>
            <person name="Glavina del Rio T."/>
            <person name="Hammon N."/>
            <person name="Israni S."/>
            <person name="Dalin E."/>
            <person name="Tice H."/>
            <person name="Pitluck S."/>
            <person name="Kiss H."/>
            <person name="Brettin T."/>
            <person name="Bruce D."/>
            <person name="Han C."/>
            <person name="Tapia R."/>
            <person name="Gilna P."/>
            <person name="Schmutz J."/>
            <person name="Larimer F."/>
            <person name="Land M."/>
            <person name="Hauser L."/>
            <person name="Kyrpides N."/>
            <person name="Mikhailova N."/>
            <person name="Nealson K."/>
            <person name="Konstantinidis K."/>
            <person name="Klappenbach J."/>
            <person name="Tiedje J."/>
            <person name="Richardson P."/>
        </authorList>
    </citation>
    <scope>NUCLEOTIDE SEQUENCE [LARGE SCALE GENOMIC DNA]</scope>
    <source>
        <strain>MR-7</strain>
    </source>
</reference>
<keyword id="KW-0378">Hydrolase</keyword>
<proteinExistence type="inferred from homology"/>
<evidence type="ECO:0000255" key="1">
    <source>
        <dbReference type="HAMAP-Rule" id="MF_00298"/>
    </source>
</evidence>
<comment type="function">
    <text evidence="1">Accelerates the degradation of transcripts by removing pyrophosphate from the 5'-end of triphosphorylated RNA, leading to a more labile monophosphorylated state that can stimulate subsequent ribonuclease cleavage.</text>
</comment>
<comment type="cofactor">
    <cofactor evidence="1">
        <name>a divalent metal cation</name>
        <dbReference type="ChEBI" id="CHEBI:60240"/>
    </cofactor>
</comment>
<comment type="similarity">
    <text evidence="1">Belongs to the Nudix hydrolase family. RppH subfamily.</text>
</comment>
<accession>Q0HSH4</accession>